<sequence>MYQSNKKKRLWKEEKERLLNMTRDERRKEYREYVSLDKIPSLMEELKSKASSDDESPEEIQVKNSLCEKVSFYKGDITQLEVDAIVNAANTSLLGGGGVDGCIHRASGPSLLAECRELGGCETGQAKITCGYELPAKYVIHTVGPIARGHITPNHKQDLASCYNSSLTLATENDIRTIAFPCISTGIYGYPNEPAANVALTTVKEFLKKNRDKIDRVIFCVFLEVDFKIYKRKLNEFFPKDGGDDEEGEKGDSDEMKEDTEGKPQSPPMKKIKEKKEDTPAPDSPDEEYSAEEATGNTQDMTAMSLETNEGNDVSSPATDPLKEGEELSEAKITGEKISVEPKTPEPEDAKMTVEEKSQEQEDSENMETSQPKVSGETEDLDGDSEEPSDVQKEIASPSNETCQESDPKDTNDDANEA</sequence>
<evidence type="ECO:0000250" key="1">
    <source>
        <dbReference type="UniProtKB" id="A1Z1Q3"/>
    </source>
</evidence>
<evidence type="ECO:0000255" key="2">
    <source>
        <dbReference type="PROSITE-ProRule" id="PRU00490"/>
    </source>
</evidence>
<evidence type="ECO:0000256" key="3">
    <source>
        <dbReference type="SAM" id="MobiDB-lite"/>
    </source>
</evidence>
<evidence type="ECO:0000305" key="4"/>
<name>MACD2_XENLA</name>
<organism>
    <name type="scientific">Xenopus laevis</name>
    <name type="common">African clawed frog</name>
    <dbReference type="NCBI Taxonomy" id="8355"/>
    <lineage>
        <taxon>Eukaryota</taxon>
        <taxon>Metazoa</taxon>
        <taxon>Chordata</taxon>
        <taxon>Craniata</taxon>
        <taxon>Vertebrata</taxon>
        <taxon>Euteleostomi</taxon>
        <taxon>Amphibia</taxon>
        <taxon>Batrachia</taxon>
        <taxon>Anura</taxon>
        <taxon>Pipoidea</taxon>
        <taxon>Pipidae</taxon>
        <taxon>Xenopodinae</taxon>
        <taxon>Xenopus</taxon>
        <taxon>Xenopus</taxon>
    </lineage>
</organism>
<gene>
    <name evidence="1" type="primary">macrod2</name>
</gene>
<comment type="function">
    <text evidence="1">Removes ADP-ribose from aspartate and glutamate residues in proteins bearing a single ADP-ribose moiety. Inactive towards proteins bearing poly-ADP-ribose. Deacetylates O-acetyl-ADP ribose, a signaling molecule generated by the deacetylation of acetylated lysine residues in histones and other proteins.</text>
</comment>
<comment type="catalytic activity">
    <reaction evidence="1">
        <text>2''-O-acetyl-ADP-D-ribose + H2O = ADP-D-ribose + acetate + H(+)</text>
        <dbReference type="Rhea" id="RHEA:57060"/>
        <dbReference type="ChEBI" id="CHEBI:15377"/>
        <dbReference type="ChEBI" id="CHEBI:15378"/>
        <dbReference type="ChEBI" id="CHEBI:30089"/>
        <dbReference type="ChEBI" id="CHEBI:57967"/>
        <dbReference type="ChEBI" id="CHEBI:83767"/>
    </reaction>
</comment>
<comment type="catalytic activity">
    <reaction evidence="1">
        <text>4-O-(ADP-D-ribosyl)-L-aspartyl-[protein] + H2O = L-aspartyl-[protein] + ADP-D-ribose + H(+)</text>
        <dbReference type="Rhea" id="RHEA:54428"/>
        <dbReference type="Rhea" id="RHEA-COMP:9867"/>
        <dbReference type="Rhea" id="RHEA-COMP:13832"/>
        <dbReference type="ChEBI" id="CHEBI:15377"/>
        <dbReference type="ChEBI" id="CHEBI:15378"/>
        <dbReference type="ChEBI" id="CHEBI:29961"/>
        <dbReference type="ChEBI" id="CHEBI:57967"/>
        <dbReference type="ChEBI" id="CHEBI:138102"/>
    </reaction>
</comment>
<comment type="catalytic activity">
    <reaction evidence="1">
        <text>5-O-(ADP-D-ribosyl)-L-glutamyl-[protein] + H2O = L-glutamyl-[protein] + ADP-D-ribose + H(+)</text>
        <dbReference type="Rhea" id="RHEA:58248"/>
        <dbReference type="Rhea" id="RHEA-COMP:10208"/>
        <dbReference type="Rhea" id="RHEA-COMP:15089"/>
        <dbReference type="ChEBI" id="CHEBI:15377"/>
        <dbReference type="ChEBI" id="CHEBI:15378"/>
        <dbReference type="ChEBI" id="CHEBI:29973"/>
        <dbReference type="ChEBI" id="CHEBI:57967"/>
        <dbReference type="ChEBI" id="CHEBI:142540"/>
    </reaction>
</comment>
<comment type="catalytic activity">
    <reaction evidence="1">
        <text>alpha-NAD(+) + H2O = ADP-D-ribose + nicotinamide + H(+)</text>
        <dbReference type="Rhea" id="RHEA:68792"/>
        <dbReference type="ChEBI" id="CHEBI:15377"/>
        <dbReference type="ChEBI" id="CHEBI:15378"/>
        <dbReference type="ChEBI" id="CHEBI:17154"/>
        <dbReference type="ChEBI" id="CHEBI:57967"/>
        <dbReference type="ChEBI" id="CHEBI:77017"/>
    </reaction>
</comment>
<comment type="activity regulation">
    <text evidence="1">Subject to product inhibition by ADP-ribose.</text>
</comment>
<comment type="subcellular location">
    <subcellularLocation>
        <location evidence="1">Nucleus</location>
    </subcellularLocation>
    <text evidence="1">Recruited to DNA lesions, probably via mono-APD-ribosylated proteins.</text>
</comment>
<comment type="similarity">
    <text evidence="4">Belongs to the MacroD-type family. MacroD1/2-like subfamily.</text>
</comment>
<proteinExistence type="evidence at transcript level"/>
<accession>Q6PAV8</accession>
<reference key="1">
    <citation type="submission" date="2003-10" db="EMBL/GenBank/DDBJ databases">
        <authorList>
            <consortium name="NIH - Xenopus Gene Collection (XGC) project"/>
        </authorList>
    </citation>
    <scope>NUCLEOTIDE SEQUENCE [LARGE SCALE MRNA]</scope>
    <source>
        <tissue>Kidney</tissue>
    </source>
</reference>
<protein>
    <recommendedName>
        <fullName evidence="4">ADP-ribose glycohydrolase MACROD2</fullName>
    </recommendedName>
    <alternativeName>
        <fullName>MACRO domain-containing protein 2</fullName>
    </alternativeName>
    <alternativeName>
        <fullName evidence="4">O-acetyl-ADP-ribose deacetylase MACROD2</fullName>
        <ecNumber evidence="1">3.5.1.-</ecNumber>
    </alternativeName>
    <alternativeName>
        <fullName evidence="4">[Protein ADP-ribosylaspartate] hydrolase MACROD2</fullName>
        <ecNumber evidence="1">3.2.2.-</ecNumber>
    </alternativeName>
    <alternativeName>
        <fullName evidence="4">[Protein ADP-ribosylglutamate] hydrolase MACROD2</fullName>
        <ecNumber evidence="1">3.2.2.-</ecNumber>
    </alternativeName>
</protein>
<keyword id="KW-0227">DNA damage</keyword>
<keyword id="KW-0378">Hydrolase</keyword>
<keyword id="KW-0539">Nucleus</keyword>
<keyword id="KW-1185">Reference proteome</keyword>
<feature type="chain" id="PRO_0000300463" description="ADP-ribose glycohydrolase MACROD2">
    <location>
        <begin position="1"/>
        <end position="418"/>
    </location>
</feature>
<feature type="domain" description="Macro" evidence="2">
    <location>
        <begin position="57"/>
        <end position="238"/>
    </location>
</feature>
<feature type="region of interest" description="Disordered" evidence="3">
    <location>
        <begin position="238"/>
        <end position="418"/>
    </location>
</feature>
<feature type="compositionally biased region" description="Basic and acidic residues" evidence="3">
    <location>
        <begin position="250"/>
        <end position="262"/>
    </location>
</feature>
<feature type="compositionally biased region" description="Polar residues" evidence="3">
    <location>
        <begin position="295"/>
        <end position="318"/>
    </location>
</feature>
<feature type="compositionally biased region" description="Basic and acidic residues" evidence="3">
    <location>
        <begin position="321"/>
        <end position="360"/>
    </location>
</feature>
<feature type="compositionally biased region" description="Acidic residues" evidence="3">
    <location>
        <begin position="377"/>
        <end position="389"/>
    </location>
</feature>
<feature type="binding site" evidence="1">
    <location>
        <begin position="75"/>
        <end position="77"/>
    </location>
    <ligand>
        <name>substrate</name>
    </ligand>
</feature>
<feature type="binding site" evidence="1">
    <location>
        <begin position="88"/>
        <end position="90"/>
    </location>
    <ligand>
        <name>substrate</name>
    </ligand>
</feature>
<feature type="binding site" evidence="1">
    <location>
        <begin position="95"/>
        <end position="100"/>
    </location>
    <ligand>
        <name>substrate</name>
    </ligand>
</feature>
<feature type="binding site" evidence="1">
    <location>
        <begin position="183"/>
        <end position="189"/>
    </location>
    <ligand>
        <name>substrate</name>
    </ligand>
</feature>
<feature type="binding site" evidence="1">
    <location>
        <position position="222"/>
    </location>
    <ligand>
        <name>substrate</name>
    </ligand>
</feature>
<dbReference type="EC" id="3.5.1.-" evidence="1"/>
<dbReference type="EC" id="3.2.2.-" evidence="1"/>
<dbReference type="EMBL" id="BC060026">
    <property type="protein sequence ID" value="AAH60026.1"/>
    <property type="molecule type" value="mRNA"/>
</dbReference>
<dbReference type="RefSeq" id="NP_001083167.1">
    <property type="nucleotide sequence ID" value="NM_001089698.1"/>
</dbReference>
<dbReference type="SMR" id="Q6PAV8"/>
<dbReference type="BioGRID" id="100110">
    <property type="interactions" value="1"/>
</dbReference>
<dbReference type="IntAct" id="Q6PAV8">
    <property type="interactions" value="1"/>
</dbReference>
<dbReference type="DNASU" id="398781"/>
<dbReference type="GeneID" id="398781"/>
<dbReference type="KEGG" id="xla:398781"/>
<dbReference type="AGR" id="Xenbase:XB-GENE-17341478"/>
<dbReference type="CTD" id="398781"/>
<dbReference type="Xenbase" id="XB-GENE-17341478">
    <property type="gene designation" value="macrod2.L"/>
</dbReference>
<dbReference type="OrthoDB" id="6133115at2759"/>
<dbReference type="CD-CODE" id="78E86D56">
    <property type="entry name" value="Mitochondrial cloud"/>
</dbReference>
<dbReference type="Proteomes" id="UP000186698">
    <property type="component" value="Chromosome 5L"/>
</dbReference>
<dbReference type="Bgee" id="398781">
    <property type="expression patterns" value="Expressed in brain and 17 other cell types or tissues"/>
</dbReference>
<dbReference type="GO" id="GO:0005654">
    <property type="term" value="C:nucleoplasm"/>
    <property type="evidence" value="ECO:0000318"/>
    <property type="project" value="GO_Central"/>
</dbReference>
<dbReference type="GO" id="GO:0005634">
    <property type="term" value="C:nucleus"/>
    <property type="evidence" value="ECO:0000250"/>
    <property type="project" value="UniProtKB"/>
</dbReference>
<dbReference type="GO" id="GO:0140293">
    <property type="term" value="F:ADP-ribosylglutamate hydrolase activity"/>
    <property type="evidence" value="ECO:0000250"/>
    <property type="project" value="UniProtKB"/>
</dbReference>
<dbReference type="GO" id="GO:0016798">
    <property type="term" value="F:hydrolase activity, acting on glycosyl bonds"/>
    <property type="evidence" value="ECO:0000250"/>
    <property type="project" value="UniProtKB"/>
</dbReference>
<dbReference type="GO" id="GO:0061463">
    <property type="term" value="F:O-acetyl-ADP-ribose deacetylase activity"/>
    <property type="evidence" value="ECO:0007669"/>
    <property type="project" value="RHEA"/>
</dbReference>
<dbReference type="GO" id="GO:0006974">
    <property type="term" value="P:DNA damage response"/>
    <property type="evidence" value="ECO:0000250"/>
    <property type="project" value="UniProtKB"/>
</dbReference>
<dbReference type="GO" id="GO:0140291">
    <property type="term" value="P:peptidyl-glutamate ADP-deribosylation"/>
    <property type="evidence" value="ECO:0000250"/>
    <property type="project" value="UniProtKB"/>
</dbReference>
<dbReference type="GO" id="GO:0051725">
    <property type="term" value="P:protein de-ADP-ribosylation"/>
    <property type="evidence" value="ECO:0000250"/>
    <property type="project" value="UniProtKB"/>
</dbReference>
<dbReference type="GO" id="GO:0042278">
    <property type="term" value="P:purine nucleoside metabolic process"/>
    <property type="evidence" value="ECO:0000318"/>
    <property type="project" value="GO_Central"/>
</dbReference>
<dbReference type="CDD" id="cd02908">
    <property type="entry name" value="Macro_OAADPr_deacetylase"/>
    <property type="match status" value="1"/>
</dbReference>
<dbReference type="FunFam" id="3.40.220.10:FF:000003">
    <property type="entry name" value="O-acetyl-ADP-ribose deacetylase MACROD2"/>
    <property type="match status" value="1"/>
</dbReference>
<dbReference type="Gene3D" id="3.40.220.10">
    <property type="entry name" value="Leucine Aminopeptidase, subunit E, domain 1"/>
    <property type="match status" value="1"/>
</dbReference>
<dbReference type="InterPro" id="IPR002589">
    <property type="entry name" value="Macro_dom"/>
</dbReference>
<dbReference type="InterPro" id="IPR043472">
    <property type="entry name" value="Macro_dom-like"/>
</dbReference>
<dbReference type="NCBIfam" id="NF001664">
    <property type="entry name" value="PRK00431.1-6"/>
    <property type="match status" value="1"/>
</dbReference>
<dbReference type="PANTHER" id="PTHR11106:SF104">
    <property type="entry name" value="ADP-RIBOSE GLYCOHYDROLASE MACROD2"/>
    <property type="match status" value="1"/>
</dbReference>
<dbReference type="PANTHER" id="PTHR11106">
    <property type="entry name" value="GANGLIOSIDE INDUCED DIFFERENTIATION ASSOCIATED PROTEIN 2-RELATED"/>
    <property type="match status" value="1"/>
</dbReference>
<dbReference type="Pfam" id="PF01661">
    <property type="entry name" value="Macro"/>
    <property type="match status" value="1"/>
</dbReference>
<dbReference type="SMART" id="SM00506">
    <property type="entry name" value="A1pp"/>
    <property type="match status" value="1"/>
</dbReference>
<dbReference type="SUPFAM" id="SSF52949">
    <property type="entry name" value="Macro domain-like"/>
    <property type="match status" value="1"/>
</dbReference>
<dbReference type="PROSITE" id="PS51154">
    <property type="entry name" value="MACRO"/>
    <property type="match status" value="1"/>
</dbReference>